<evidence type="ECO:0000255" key="1">
    <source>
        <dbReference type="HAMAP-Rule" id="MF_00300"/>
    </source>
</evidence>
<reference key="1">
    <citation type="journal article" date="2009" name="Proc. Natl. Acad. Sci. U.S.A.">
        <title>Biogeography of the Sulfolobus islandicus pan-genome.</title>
        <authorList>
            <person name="Reno M.L."/>
            <person name="Held N.L."/>
            <person name="Fields C.J."/>
            <person name="Burke P.V."/>
            <person name="Whitaker R.J."/>
        </authorList>
    </citation>
    <scope>NUCLEOTIDE SEQUENCE [LARGE SCALE GENOMIC DNA]</scope>
    <source>
        <strain>M.16.4 / Kamchatka #3</strain>
    </source>
</reference>
<protein>
    <recommendedName>
        <fullName evidence="1">Chorismate synthase</fullName>
        <shortName evidence="1">CS</shortName>
        <ecNumber evidence="1">4.2.3.5</ecNumber>
    </recommendedName>
    <alternativeName>
        <fullName evidence="1">5-enolpyruvylshikimate-3-phosphate phospholyase</fullName>
    </alternativeName>
</protein>
<dbReference type="EC" id="4.2.3.5" evidence="1"/>
<dbReference type="EMBL" id="CP001402">
    <property type="protein sequence ID" value="ACR42446.1"/>
    <property type="molecule type" value="Genomic_DNA"/>
</dbReference>
<dbReference type="RefSeq" id="WP_012711770.1">
    <property type="nucleotide sequence ID" value="NC_012726.1"/>
</dbReference>
<dbReference type="SMR" id="C4KIN2"/>
<dbReference type="GeneID" id="15298205"/>
<dbReference type="GeneID" id="84062147"/>
<dbReference type="KEGG" id="sid:M164_1843"/>
<dbReference type="HOGENOM" id="CLU_034547_0_0_2"/>
<dbReference type="UniPathway" id="UPA00053">
    <property type="reaction ID" value="UER00090"/>
</dbReference>
<dbReference type="Proteomes" id="UP000001479">
    <property type="component" value="Chromosome"/>
</dbReference>
<dbReference type="GO" id="GO:0005829">
    <property type="term" value="C:cytosol"/>
    <property type="evidence" value="ECO:0007669"/>
    <property type="project" value="TreeGrafter"/>
</dbReference>
<dbReference type="GO" id="GO:0004107">
    <property type="term" value="F:chorismate synthase activity"/>
    <property type="evidence" value="ECO:0007669"/>
    <property type="project" value="UniProtKB-UniRule"/>
</dbReference>
<dbReference type="GO" id="GO:0010181">
    <property type="term" value="F:FMN binding"/>
    <property type="evidence" value="ECO:0007669"/>
    <property type="project" value="TreeGrafter"/>
</dbReference>
<dbReference type="GO" id="GO:0008652">
    <property type="term" value="P:amino acid biosynthetic process"/>
    <property type="evidence" value="ECO:0007669"/>
    <property type="project" value="UniProtKB-KW"/>
</dbReference>
<dbReference type="GO" id="GO:0009073">
    <property type="term" value="P:aromatic amino acid family biosynthetic process"/>
    <property type="evidence" value="ECO:0007669"/>
    <property type="project" value="UniProtKB-KW"/>
</dbReference>
<dbReference type="GO" id="GO:0009423">
    <property type="term" value="P:chorismate biosynthetic process"/>
    <property type="evidence" value="ECO:0007669"/>
    <property type="project" value="UniProtKB-UniRule"/>
</dbReference>
<dbReference type="CDD" id="cd07304">
    <property type="entry name" value="Chorismate_synthase"/>
    <property type="match status" value="1"/>
</dbReference>
<dbReference type="FunFam" id="3.60.150.10:FF:000002">
    <property type="entry name" value="Chorismate synthase"/>
    <property type="match status" value="1"/>
</dbReference>
<dbReference type="Gene3D" id="3.60.150.10">
    <property type="entry name" value="Chorismate synthase AroC"/>
    <property type="match status" value="1"/>
</dbReference>
<dbReference type="HAMAP" id="MF_00300">
    <property type="entry name" value="Chorismate_synth"/>
    <property type="match status" value="1"/>
</dbReference>
<dbReference type="InterPro" id="IPR000453">
    <property type="entry name" value="Chorismate_synth"/>
</dbReference>
<dbReference type="InterPro" id="IPR035904">
    <property type="entry name" value="Chorismate_synth_AroC_sf"/>
</dbReference>
<dbReference type="InterPro" id="IPR020541">
    <property type="entry name" value="Chorismate_synthase_CS"/>
</dbReference>
<dbReference type="NCBIfam" id="TIGR00033">
    <property type="entry name" value="aroC"/>
    <property type="match status" value="1"/>
</dbReference>
<dbReference type="NCBIfam" id="NF003793">
    <property type="entry name" value="PRK05382.1"/>
    <property type="match status" value="1"/>
</dbReference>
<dbReference type="PANTHER" id="PTHR21085">
    <property type="entry name" value="CHORISMATE SYNTHASE"/>
    <property type="match status" value="1"/>
</dbReference>
<dbReference type="PANTHER" id="PTHR21085:SF0">
    <property type="entry name" value="CHORISMATE SYNTHASE"/>
    <property type="match status" value="1"/>
</dbReference>
<dbReference type="Pfam" id="PF01264">
    <property type="entry name" value="Chorismate_synt"/>
    <property type="match status" value="1"/>
</dbReference>
<dbReference type="PIRSF" id="PIRSF001456">
    <property type="entry name" value="Chorismate_synth"/>
    <property type="match status" value="1"/>
</dbReference>
<dbReference type="SUPFAM" id="SSF103263">
    <property type="entry name" value="Chorismate synthase, AroC"/>
    <property type="match status" value="1"/>
</dbReference>
<dbReference type="PROSITE" id="PS00787">
    <property type="entry name" value="CHORISMATE_SYNTHASE_1"/>
    <property type="match status" value="1"/>
</dbReference>
<dbReference type="PROSITE" id="PS00788">
    <property type="entry name" value="CHORISMATE_SYNTHASE_2"/>
    <property type="match status" value="1"/>
</dbReference>
<dbReference type="PROSITE" id="PS00789">
    <property type="entry name" value="CHORISMATE_SYNTHASE_3"/>
    <property type="match status" value="1"/>
</dbReference>
<keyword id="KW-0028">Amino-acid biosynthesis</keyword>
<keyword id="KW-0057">Aromatic amino acid biosynthesis</keyword>
<keyword id="KW-0274">FAD</keyword>
<keyword id="KW-0285">Flavoprotein</keyword>
<keyword id="KW-0288">FMN</keyword>
<keyword id="KW-0456">Lyase</keyword>
<keyword id="KW-0521">NADP</keyword>
<gene>
    <name evidence="1" type="primary">aroC</name>
    <name type="ordered locus">M164_1843</name>
</gene>
<organism>
    <name type="scientific">Saccharolobus islandicus (strain M.16.4 / Kamchatka #3)</name>
    <name type="common">Sulfolobus islandicus</name>
    <dbReference type="NCBI Taxonomy" id="426118"/>
    <lineage>
        <taxon>Archaea</taxon>
        <taxon>Thermoproteota</taxon>
        <taxon>Thermoprotei</taxon>
        <taxon>Sulfolobales</taxon>
        <taxon>Sulfolobaceae</taxon>
        <taxon>Saccharolobus</taxon>
    </lineage>
</organism>
<proteinExistence type="inferred from homology"/>
<accession>C4KIN2</accession>
<comment type="function">
    <text evidence="1">Catalyzes the anti-1,4-elimination of the C-3 phosphate and the C-6 proR hydrogen from 5-enolpyruvylshikimate-3-phosphate (EPSP) to yield chorismate, which is the branch point compound that serves as the starting substrate for the three terminal pathways of aromatic amino acid biosynthesis. This reaction introduces a second double bond into the aromatic ring system.</text>
</comment>
<comment type="catalytic activity">
    <reaction evidence="1">
        <text>5-O-(1-carboxyvinyl)-3-phosphoshikimate = chorismate + phosphate</text>
        <dbReference type="Rhea" id="RHEA:21020"/>
        <dbReference type="ChEBI" id="CHEBI:29748"/>
        <dbReference type="ChEBI" id="CHEBI:43474"/>
        <dbReference type="ChEBI" id="CHEBI:57701"/>
        <dbReference type="EC" id="4.2.3.5"/>
    </reaction>
</comment>
<comment type="cofactor">
    <cofactor evidence="1">
        <name>FMNH2</name>
        <dbReference type="ChEBI" id="CHEBI:57618"/>
    </cofactor>
    <text evidence="1">Reduced FMN (FMNH(2)).</text>
</comment>
<comment type="pathway">
    <text evidence="1">Metabolic intermediate biosynthesis; chorismate biosynthesis; chorismate from D-erythrose 4-phosphate and phosphoenolpyruvate: step 7/7.</text>
</comment>
<comment type="similarity">
    <text evidence="1">Belongs to the chorismate synthase family.</text>
</comment>
<name>AROC_SACI6</name>
<feature type="chain" id="PRO_1000204960" description="Chorismate synthase">
    <location>
        <begin position="1"/>
        <end position="391"/>
    </location>
</feature>
<feature type="binding site" evidence="1">
    <location>
        <position position="48"/>
    </location>
    <ligand>
        <name>NADP(+)</name>
        <dbReference type="ChEBI" id="CHEBI:58349"/>
    </ligand>
</feature>
<feature type="binding site" evidence="1">
    <location>
        <begin position="126"/>
        <end position="128"/>
    </location>
    <ligand>
        <name>FMN</name>
        <dbReference type="ChEBI" id="CHEBI:58210"/>
    </ligand>
</feature>
<feature type="binding site" evidence="1">
    <location>
        <position position="286"/>
    </location>
    <ligand>
        <name>FMN</name>
        <dbReference type="ChEBI" id="CHEBI:58210"/>
    </ligand>
</feature>
<feature type="binding site" evidence="1">
    <location>
        <begin position="301"/>
        <end position="305"/>
    </location>
    <ligand>
        <name>FMN</name>
        <dbReference type="ChEBI" id="CHEBI:58210"/>
    </ligand>
</feature>
<feature type="binding site" evidence="1">
    <location>
        <position position="328"/>
    </location>
    <ligand>
        <name>FMN</name>
        <dbReference type="ChEBI" id="CHEBI:58210"/>
    </ligand>
</feature>
<sequence>MPGNSFGKLFRVTTFGESHGPAVGVVIDGVPAGLPLTVEDIKFELEFRRPGRLYVSGRREKDEPEILSGIFNNRTTGSPIAVIVRNTDVISSFYEEIRYKPRPGHADLPFIMKYGYENWDYRGGGRASARETVGRVIAGAVAKKLLMLADTWIAGHLRSLGPEELNEEVTFEEVLCSKYSPVRASKKVLEEKYEALIKKATQEGDSYGGIAEVITKNPPIGLGEPVFDKMKAELAKAIMSIPAVTGFEYGLGFMVSKMKGSEANDEIIRKDNKIGWKYNYAGGILGGLTNGEDLIVRCAFKPTSSIRKPQKTIDLRNLEETYISVIGRHDPAVAIRGVTVVESMVALTLVDHAMRAGVIPLVKLTEEQGNIVQQRWERYVRSCKPMEESQL</sequence>